<feature type="chain" id="PRO_0000214862" description="UPF0270 protein VV3048">
    <location>
        <begin position="1"/>
        <end position="70"/>
    </location>
</feature>
<evidence type="ECO:0000255" key="1">
    <source>
        <dbReference type="HAMAP-Rule" id="MF_00690"/>
    </source>
</evidence>
<proteinExistence type="inferred from homology"/>
<dbReference type="EMBL" id="BA000037">
    <property type="protein sequence ID" value="BAC95812.1"/>
    <property type="molecule type" value="Genomic_DNA"/>
</dbReference>
<dbReference type="RefSeq" id="WP_011079299.1">
    <property type="nucleotide sequence ID" value="NC_005139.1"/>
</dbReference>
<dbReference type="SMR" id="Q7MH24"/>
<dbReference type="STRING" id="672.VV93_v1c27760"/>
<dbReference type="KEGG" id="vvy:VV3048"/>
<dbReference type="eggNOG" id="COG3089">
    <property type="taxonomic scope" value="Bacteria"/>
</dbReference>
<dbReference type="HOGENOM" id="CLU_186759_2_0_6"/>
<dbReference type="Proteomes" id="UP000002675">
    <property type="component" value="Chromosome I"/>
</dbReference>
<dbReference type="Gene3D" id="1.10.10.610">
    <property type="entry name" value="YehU-like"/>
    <property type="match status" value="1"/>
</dbReference>
<dbReference type="HAMAP" id="MF_00690">
    <property type="entry name" value="UPF0270"/>
    <property type="match status" value="1"/>
</dbReference>
<dbReference type="InterPro" id="IPR010648">
    <property type="entry name" value="UPF0270"/>
</dbReference>
<dbReference type="InterPro" id="IPR036685">
    <property type="entry name" value="YehU-like_sf"/>
</dbReference>
<dbReference type="NCBIfam" id="NF003438">
    <property type="entry name" value="PRK04966.1"/>
    <property type="match status" value="1"/>
</dbReference>
<dbReference type="Pfam" id="PF06794">
    <property type="entry name" value="UPF0270"/>
    <property type="match status" value="1"/>
</dbReference>
<dbReference type="PIRSF" id="PIRSF006169">
    <property type="entry name" value="UCP006169"/>
    <property type="match status" value="1"/>
</dbReference>
<dbReference type="SUPFAM" id="SSF118001">
    <property type="entry name" value="YehU-like"/>
    <property type="match status" value="1"/>
</dbReference>
<organism>
    <name type="scientific">Vibrio vulnificus (strain YJ016)</name>
    <dbReference type="NCBI Taxonomy" id="196600"/>
    <lineage>
        <taxon>Bacteria</taxon>
        <taxon>Pseudomonadati</taxon>
        <taxon>Pseudomonadota</taxon>
        <taxon>Gammaproteobacteria</taxon>
        <taxon>Vibrionales</taxon>
        <taxon>Vibrionaceae</taxon>
        <taxon>Vibrio</taxon>
    </lineage>
</organism>
<accession>Q7MH24</accession>
<protein>
    <recommendedName>
        <fullName evidence="1">UPF0270 protein VV3048</fullName>
    </recommendedName>
</protein>
<reference key="1">
    <citation type="journal article" date="2003" name="Genome Res.">
        <title>Comparative genome analysis of Vibrio vulnificus, a marine pathogen.</title>
        <authorList>
            <person name="Chen C.-Y."/>
            <person name="Wu K.-M."/>
            <person name="Chang Y.-C."/>
            <person name="Chang C.-H."/>
            <person name="Tsai H.-C."/>
            <person name="Liao T.-L."/>
            <person name="Liu Y.-M."/>
            <person name="Chen H.-J."/>
            <person name="Shen A.B.-T."/>
            <person name="Li J.-C."/>
            <person name="Su T.-L."/>
            <person name="Shao C.-P."/>
            <person name="Lee C.-T."/>
            <person name="Hor L.-I."/>
            <person name="Tsai S.-F."/>
        </authorList>
    </citation>
    <scope>NUCLEOTIDE SEQUENCE [LARGE SCALE GENOMIC DNA]</scope>
    <source>
        <strain>YJ016</strain>
    </source>
</reference>
<gene>
    <name type="ordered locus">VV3048</name>
</gene>
<name>Y3048_VIBVY</name>
<sequence>MIVPWQQISPEALSNLIREFVLREGTDYGESEYSLEEKIAQVQQQLECGEAVVVFSELHETVDIQLKQKF</sequence>
<comment type="similarity">
    <text evidence="1">Belongs to the UPF0270 family.</text>
</comment>